<gene>
    <name type="ordered locus">XF_1047</name>
</gene>
<keyword id="KW-0997">Cell inner membrane</keyword>
<keyword id="KW-1003">Cell membrane</keyword>
<keyword id="KW-0378">Hydrolase</keyword>
<keyword id="KW-0472">Membrane</keyword>
<keyword id="KW-0479">Metal-binding</keyword>
<keyword id="KW-0482">Metalloprotease</keyword>
<keyword id="KW-0645">Protease</keyword>
<keyword id="KW-0812">Transmembrane</keyword>
<keyword id="KW-1133">Transmembrane helix</keyword>
<keyword id="KW-0862">Zinc</keyword>
<sequence>MGDFFASIWWMIVSFSVLVTFHEFGHYWVARRCGVKVLRFSIGFGTPLWSRRSSSGTEFVIGAIPLGGYVKMLDEREADVTVAERNQAFNRKSVWQRIAIVAAGPLANLLLCMLLLWVLFVIGKQDYSATVGRAEHLAAQAGIHPGDRITAIDGRQVTSWSEASMLLTAAAMDRQNAVLRVIGPYGERSEHTLELSKLKQPFDERHVTALVGINWQFMLQPPIIAKIEPGSIAEGAIKPGDIVLAVDGQQTLSTEDLYNQIQKLGRDGHPGMIEIRRGEERLALELSPRKSAQGVWLLGVKTNPGPVPAFDSQQRYGVLAAVPLAIRETGRMTADSLGMMKRIITGQASAKNISGPISIAKIANASAKRGVGWFIYFLSLLSLSLAIINLFPIPILDGGHLLYYAIELLKGSPLSTRAMAAGQYIGLALLAGLMGLAFYNDLLG</sequence>
<comment type="cofactor">
    <cofactor evidence="5">
        <name>Zn(2+)</name>
        <dbReference type="ChEBI" id="CHEBI:29105"/>
    </cofactor>
</comment>
<comment type="subcellular location">
    <subcellularLocation>
        <location evidence="1">Cell inner membrane</location>
        <topology evidence="1">Multi-pass membrane protein</topology>
    </subcellularLocation>
</comment>
<comment type="similarity">
    <text evidence="5">Belongs to the peptidase M50B family.</text>
</comment>
<comment type="sequence caution" evidence="5">
    <conflict type="erroneous initiation">
        <sequence resource="EMBL-CDS" id="AAF83857"/>
    </conflict>
</comment>
<feature type="chain" id="PRO_0000088476" description="Putative zinc metalloprotease XF_1047">
    <location>
        <begin position="1"/>
        <end position="444"/>
    </location>
</feature>
<feature type="transmembrane region" description="Helical" evidence="2">
    <location>
        <begin position="98"/>
        <end position="120"/>
    </location>
</feature>
<feature type="transmembrane region" description="Helical" evidence="2">
    <location>
        <begin position="371"/>
        <end position="393"/>
    </location>
</feature>
<feature type="transmembrane region" description="Helical" evidence="2">
    <location>
        <begin position="418"/>
        <end position="440"/>
    </location>
</feature>
<feature type="domain" description="PDZ" evidence="3">
    <location>
        <begin position="192"/>
        <end position="276"/>
    </location>
</feature>
<feature type="active site" evidence="4">
    <location>
        <position position="23"/>
    </location>
</feature>
<feature type="binding site" evidence="4">
    <location>
        <position position="22"/>
    </location>
    <ligand>
        <name>Zn(2+)</name>
        <dbReference type="ChEBI" id="CHEBI:29105"/>
        <note>catalytic</note>
    </ligand>
</feature>
<feature type="binding site" evidence="4">
    <location>
        <position position="26"/>
    </location>
    <ligand>
        <name>Zn(2+)</name>
        <dbReference type="ChEBI" id="CHEBI:29105"/>
        <note>catalytic</note>
    </ligand>
</feature>
<protein>
    <recommendedName>
        <fullName>Putative zinc metalloprotease XF_1047</fullName>
        <ecNumber>3.4.24.-</ecNumber>
    </recommendedName>
</protein>
<accession>Q9PEI1</accession>
<evidence type="ECO:0000250" key="1"/>
<evidence type="ECO:0000255" key="2"/>
<evidence type="ECO:0000255" key="3">
    <source>
        <dbReference type="PROSITE-ProRule" id="PRU00143"/>
    </source>
</evidence>
<evidence type="ECO:0000255" key="4">
    <source>
        <dbReference type="PROSITE-ProRule" id="PRU10095"/>
    </source>
</evidence>
<evidence type="ECO:0000305" key="5"/>
<reference key="1">
    <citation type="journal article" date="2000" name="Nature">
        <title>The genome sequence of the plant pathogen Xylella fastidiosa.</title>
        <authorList>
            <person name="Simpson A.J.G."/>
            <person name="Reinach F.C."/>
            <person name="Arruda P."/>
            <person name="Abreu F.A."/>
            <person name="Acencio M."/>
            <person name="Alvarenga R."/>
            <person name="Alves L.M.C."/>
            <person name="Araya J.E."/>
            <person name="Baia G.S."/>
            <person name="Baptista C.S."/>
            <person name="Barros M.H."/>
            <person name="Bonaccorsi E.D."/>
            <person name="Bordin S."/>
            <person name="Bove J.M."/>
            <person name="Briones M.R.S."/>
            <person name="Bueno M.R.P."/>
            <person name="Camargo A.A."/>
            <person name="Camargo L.E.A."/>
            <person name="Carraro D.M."/>
            <person name="Carrer H."/>
            <person name="Colauto N.B."/>
            <person name="Colombo C."/>
            <person name="Costa F.F."/>
            <person name="Costa M.C.R."/>
            <person name="Costa-Neto C.M."/>
            <person name="Coutinho L.L."/>
            <person name="Cristofani M."/>
            <person name="Dias-Neto E."/>
            <person name="Docena C."/>
            <person name="El-Dorry H."/>
            <person name="Facincani A.P."/>
            <person name="Ferreira A.J.S."/>
            <person name="Ferreira V.C.A."/>
            <person name="Ferro J.A."/>
            <person name="Fraga J.S."/>
            <person name="Franca S.C."/>
            <person name="Franco M.C."/>
            <person name="Frohme M."/>
            <person name="Furlan L.R."/>
            <person name="Garnier M."/>
            <person name="Goldman G.H."/>
            <person name="Goldman M.H.S."/>
            <person name="Gomes S.L."/>
            <person name="Gruber A."/>
            <person name="Ho P.L."/>
            <person name="Hoheisel J.D."/>
            <person name="Junqueira M.L."/>
            <person name="Kemper E.L."/>
            <person name="Kitajima J.P."/>
            <person name="Krieger J.E."/>
            <person name="Kuramae E.E."/>
            <person name="Laigret F."/>
            <person name="Lambais M.R."/>
            <person name="Leite L.C.C."/>
            <person name="Lemos E.G.M."/>
            <person name="Lemos M.V.F."/>
            <person name="Lopes S.A."/>
            <person name="Lopes C.R."/>
            <person name="Machado J.A."/>
            <person name="Machado M.A."/>
            <person name="Madeira A.M.B.N."/>
            <person name="Madeira H.M.F."/>
            <person name="Marino C.L."/>
            <person name="Marques M.V."/>
            <person name="Martins E.A.L."/>
            <person name="Martins E.M.F."/>
            <person name="Matsukuma A.Y."/>
            <person name="Menck C.F.M."/>
            <person name="Miracca E.C."/>
            <person name="Miyaki C.Y."/>
            <person name="Monteiro-Vitorello C.B."/>
            <person name="Moon D.H."/>
            <person name="Nagai M.A."/>
            <person name="Nascimento A.L.T.O."/>
            <person name="Netto L.E.S."/>
            <person name="Nhani A. Jr."/>
            <person name="Nobrega F.G."/>
            <person name="Nunes L.R."/>
            <person name="Oliveira M.A."/>
            <person name="de Oliveira M.C."/>
            <person name="de Oliveira R.C."/>
            <person name="Palmieri D.A."/>
            <person name="Paris A."/>
            <person name="Peixoto B.R."/>
            <person name="Pereira G.A.G."/>
            <person name="Pereira H.A. Jr."/>
            <person name="Pesquero J.B."/>
            <person name="Quaggio R.B."/>
            <person name="Roberto P.G."/>
            <person name="Rodrigues V."/>
            <person name="de Rosa A.J.M."/>
            <person name="de Rosa V.E. Jr."/>
            <person name="de Sa R.G."/>
            <person name="Santelli R.V."/>
            <person name="Sawasaki H.E."/>
            <person name="da Silva A.C.R."/>
            <person name="da Silva A.M."/>
            <person name="da Silva F.R."/>
            <person name="Silva W.A. Jr."/>
            <person name="da Silveira J.F."/>
            <person name="Silvestri M.L.Z."/>
            <person name="Siqueira W.J."/>
            <person name="de Souza A.A."/>
            <person name="de Souza A.P."/>
            <person name="Terenzi M.F."/>
            <person name="Truffi D."/>
            <person name="Tsai S.M."/>
            <person name="Tsuhako M.H."/>
            <person name="Vallada H."/>
            <person name="Van Sluys M.A."/>
            <person name="Verjovski-Almeida S."/>
            <person name="Vettore A.L."/>
            <person name="Zago M.A."/>
            <person name="Zatz M."/>
            <person name="Meidanis J."/>
            <person name="Setubal J.C."/>
        </authorList>
    </citation>
    <scope>NUCLEOTIDE SEQUENCE [LARGE SCALE GENOMIC DNA]</scope>
    <source>
        <strain>9a5c</strain>
    </source>
</reference>
<proteinExistence type="inferred from homology"/>
<dbReference type="EC" id="3.4.24.-"/>
<dbReference type="EMBL" id="AE003849">
    <property type="protein sequence ID" value="AAF83857.1"/>
    <property type="status" value="ALT_INIT"/>
    <property type="molecule type" value="Genomic_DNA"/>
</dbReference>
<dbReference type="PIR" id="G82728">
    <property type="entry name" value="G82728"/>
</dbReference>
<dbReference type="SMR" id="Q9PEI1"/>
<dbReference type="STRING" id="160492.XF_1047"/>
<dbReference type="KEGG" id="xfa:XF_1047"/>
<dbReference type="eggNOG" id="COG0750">
    <property type="taxonomic scope" value="Bacteria"/>
</dbReference>
<dbReference type="HOGENOM" id="CLU_025778_0_2_6"/>
<dbReference type="Proteomes" id="UP000000812">
    <property type="component" value="Chromosome"/>
</dbReference>
<dbReference type="GO" id="GO:0005886">
    <property type="term" value="C:plasma membrane"/>
    <property type="evidence" value="ECO:0007669"/>
    <property type="project" value="UniProtKB-SubCell"/>
</dbReference>
<dbReference type="GO" id="GO:0046872">
    <property type="term" value="F:metal ion binding"/>
    <property type="evidence" value="ECO:0007669"/>
    <property type="project" value="UniProtKB-KW"/>
</dbReference>
<dbReference type="GO" id="GO:0004222">
    <property type="term" value="F:metalloendopeptidase activity"/>
    <property type="evidence" value="ECO:0007669"/>
    <property type="project" value="InterPro"/>
</dbReference>
<dbReference type="GO" id="GO:0006508">
    <property type="term" value="P:proteolysis"/>
    <property type="evidence" value="ECO:0007669"/>
    <property type="project" value="UniProtKB-KW"/>
</dbReference>
<dbReference type="CDD" id="cd06163">
    <property type="entry name" value="S2P-M50_PDZ_RseP-like"/>
    <property type="match status" value="1"/>
</dbReference>
<dbReference type="Gene3D" id="2.30.42.10">
    <property type="match status" value="2"/>
</dbReference>
<dbReference type="InterPro" id="IPR001478">
    <property type="entry name" value="PDZ"/>
</dbReference>
<dbReference type="InterPro" id="IPR041489">
    <property type="entry name" value="PDZ_6"/>
</dbReference>
<dbReference type="InterPro" id="IPR036034">
    <property type="entry name" value="PDZ_sf"/>
</dbReference>
<dbReference type="InterPro" id="IPR004387">
    <property type="entry name" value="Pept_M50_Zn"/>
</dbReference>
<dbReference type="InterPro" id="IPR008915">
    <property type="entry name" value="Peptidase_M50"/>
</dbReference>
<dbReference type="NCBIfam" id="TIGR00054">
    <property type="entry name" value="RIP metalloprotease RseP"/>
    <property type="match status" value="1"/>
</dbReference>
<dbReference type="PANTHER" id="PTHR42837:SF2">
    <property type="entry name" value="MEMBRANE METALLOPROTEASE ARASP2, CHLOROPLASTIC-RELATED"/>
    <property type="match status" value="1"/>
</dbReference>
<dbReference type="PANTHER" id="PTHR42837">
    <property type="entry name" value="REGULATOR OF SIGMA-E PROTEASE RSEP"/>
    <property type="match status" value="1"/>
</dbReference>
<dbReference type="Pfam" id="PF17820">
    <property type="entry name" value="PDZ_6"/>
    <property type="match status" value="2"/>
</dbReference>
<dbReference type="Pfam" id="PF02163">
    <property type="entry name" value="Peptidase_M50"/>
    <property type="match status" value="1"/>
</dbReference>
<dbReference type="SMART" id="SM00228">
    <property type="entry name" value="PDZ"/>
    <property type="match status" value="2"/>
</dbReference>
<dbReference type="SUPFAM" id="SSF50156">
    <property type="entry name" value="PDZ domain-like"/>
    <property type="match status" value="2"/>
</dbReference>
<dbReference type="PROSITE" id="PS50106">
    <property type="entry name" value="PDZ"/>
    <property type="match status" value="1"/>
</dbReference>
<dbReference type="PROSITE" id="PS00142">
    <property type="entry name" value="ZINC_PROTEASE"/>
    <property type="match status" value="1"/>
</dbReference>
<name>Y1047_XYLFA</name>
<organism>
    <name type="scientific">Xylella fastidiosa (strain 9a5c)</name>
    <dbReference type="NCBI Taxonomy" id="160492"/>
    <lineage>
        <taxon>Bacteria</taxon>
        <taxon>Pseudomonadati</taxon>
        <taxon>Pseudomonadota</taxon>
        <taxon>Gammaproteobacteria</taxon>
        <taxon>Lysobacterales</taxon>
        <taxon>Lysobacteraceae</taxon>
        <taxon>Xylella</taxon>
    </lineage>
</organism>